<organism>
    <name type="scientific">Montinia caryophyllacea</name>
    <name type="common">Wild clove bush</name>
    <dbReference type="NCBI Taxonomy" id="23084"/>
    <lineage>
        <taxon>Eukaryota</taxon>
        <taxon>Viridiplantae</taxon>
        <taxon>Streptophyta</taxon>
        <taxon>Embryophyta</taxon>
        <taxon>Tracheophyta</taxon>
        <taxon>Spermatophyta</taxon>
        <taxon>Magnoliopsida</taxon>
        <taxon>eudicotyledons</taxon>
        <taxon>Gunneridae</taxon>
        <taxon>Pentapetalae</taxon>
        <taxon>asterids</taxon>
        <taxon>lamiids</taxon>
        <taxon>Solanales</taxon>
        <taxon>Montiniaceae</taxon>
        <taxon>Montinia</taxon>
    </lineage>
</organism>
<reference key="1">
    <citation type="journal article" date="2002" name="Am. J. Bot.">
        <title>Monophyly of the Convolvulaceae and circumscription of their major lineages based on DNA sequences of multiple chloroplast loci.</title>
        <authorList>
            <person name="Stefanovic S."/>
            <person name="Krueger L."/>
            <person name="Olmstead R.G."/>
        </authorList>
        <dbReference type="AGRICOLA" id="IND23320510"/>
    </citation>
    <scope>NUCLEOTIDE SEQUENCE [GENOMIC DNA]</scope>
</reference>
<comment type="function">
    <text evidence="1">This b-type cytochrome is tightly associated with the reaction center of photosystem II (PSII). PSII is a light-driven water:plastoquinone oxidoreductase that uses light energy to abstract electrons from H(2)O, generating O(2) and a proton gradient subsequently used for ATP formation. It consists of a core antenna complex that captures photons, and an electron transfer chain that converts photonic excitation into a charge separation.</text>
</comment>
<comment type="cofactor">
    <cofactor evidence="1">
        <name>heme b</name>
        <dbReference type="ChEBI" id="CHEBI:60344"/>
    </cofactor>
    <text evidence="1">With its partner (PsbE) binds heme. PSII binds additional chlorophylls, carotenoids and specific lipids.</text>
</comment>
<comment type="subunit">
    <text evidence="1">Heterodimer of an alpha subunit and a beta subunit. PSII is composed of 1 copy each of membrane proteins PsbA, PsbB, PsbC, PsbD, PsbE, PsbF, PsbH, PsbI, PsbJ, PsbK, PsbL, PsbM, PsbT, PsbX, PsbY, PsbZ, Psb30/Ycf12, at least 3 peripheral proteins of the oxygen-evolving complex and a large number of cofactors. It forms dimeric complexes.</text>
</comment>
<comment type="subcellular location">
    <subcellularLocation>
        <location evidence="1">Plastid</location>
        <location evidence="1">Chloroplast thylakoid membrane</location>
        <topology evidence="1">Single-pass membrane protein</topology>
    </subcellularLocation>
</comment>
<comment type="similarity">
    <text evidence="1">Belongs to the PsbE/PsbF family.</text>
</comment>
<gene>
    <name evidence="1" type="primary">psbF</name>
</gene>
<sequence length="39" mass="4484">MTIDRTYPIFTVRWLAVHGLAVPTVFFLGSISAMQFIQR</sequence>
<keyword id="KW-0150">Chloroplast</keyword>
<keyword id="KW-0249">Electron transport</keyword>
<keyword id="KW-0349">Heme</keyword>
<keyword id="KW-0408">Iron</keyword>
<keyword id="KW-0472">Membrane</keyword>
<keyword id="KW-0479">Metal-binding</keyword>
<keyword id="KW-0602">Photosynthesis</keyword>
<keyword id="KW-0604">Photosystem II</keyword>
<keyword id="KW-0934">Plastid</keyword>
<keyword id="KW-0793">Thylakoid</keyword>
<keyword id="KW-0812">Transmembrane</keyword>
<keyword id="KW-1133">Transmembrane helix</keyword>
<keyword id="KW-0813">Transport</keyword>
<proteinExistence type="inferred from homology"/>
<protein>
    <recommendedName>
        <fullName evidence="1">Cytochrome b559 subunit beta</fullName>
    </recommendedName>
    <alternativeName>
        <fullName evidence="1">PSII reaction center subunit VI</fullName>
    </alternativeName>
</protein>
<feature type="chain" id="PRO_0000200422" description="Cytochrome b559 subunit beta">
    <location>
        <begin position="1"/>
        <end position="39"/>
    </location>
</feature>
<feature type="transmembrane region" description="Helical" evidence="1">
    <location>
        <begin position="14"/>
        <end position="30"/>
    </location>
</feature>
<feature type="binding site" description="axial binding residue" evidence="1">
    <location>
        <position position="18"/>
    </location>
    <ligand>
        <name>heme</name>
        <dbReference type="ChEBI" id="CHEBI:30413"/>
        <note>ligand shared with alpha subunit</note>
    </ligand>
    <ligandPart>
        <name>Fe</name>
        <dbReference type="ChEBI" id="CHEBI:18248"/>
    </ligandPart>
</feature>
<evidence type="ECO:0000255" key="1">
    <source>
        <dbReference type="HAMAP-Rule" id="MF_00643"/>
    </source>
</evidence>
<accession>Q7H828</accession>
<geneLocation type="chloroplast"/>
<dbReference type="EMBL" id="AY100950">
    <property type="protein sequence ID" value="AAM55918.1"/>
    <property type="molecule type" value="Genomic_DNA"/>
</dbReference>
<dbReference type="SMR" id="Q7H828"/>
<dbReference type="GO" id="GO:0009535">
    <property type="term" value="C:chloroplast thylakoid membrane"/>
    <property type="evidence" value="ECO:0007669"/>
    <property type="project" value="UniProtKB-SubCell"/>
</dbReference>
<dbReference type="GO" id="GO:0009539">
    <property type="term" value="C:photosystem II reaction center"/>
    <property type="evidence" value="ECO:0007669"/>
    <property type="project" value="InterPro"/>
</dbReference>
<dbReference type="GO" id="GO:0009055">
    <property type="term" value="F:electron transfer activity"/>
    <property type="evidence" value="ECO:0007669"/>
    <property type="project" value="UniProtKB-UniRule"/>
</dbReference>
<dbReference type="GO" id="GO:0020037">
    <property type="term" value="F:heme binding"/>
    <property type="evidence" value="ECO:0007669"/>
    <property type="project" value="InterPro"/>
</dbReference>
<dbReference type="GO" id="GO:0005506">
    <property type="term" value="F:iron ion binding"/>
    <property type="evidence" value="ECO:0007669"/>
    <property type="project" value="UniProtKB-UniRule"/>
</dbReference>
<dbReference type="GO" id="GO:0009767">
    <property type="term" value="P:photosynthetic electron transport chain"/>
    <property type="evidence" value="ECO:0007669"/>
    <property type="project" value="InterPro"/>
</dbReference>
<dbReference type="HAMAP" id="MF_00643">
    <property type="entry name" value="PSII_PsbF"/>
    <property type="match status" value="1"/>
</dbReference>
<dbReference type="InterPro" id="IPR006241">
    <property type="entry name" value="PSII_cyt_b559_bsu"/>
</dbReference>
<dbReference type="InterPro" id="IPR006216">
    <property type="entry name" value="PSII_cyt_b559_CS"/>
</dbReference>
<dbReference type="InterPro" id="IPR013081">
    <property type="entry name" value="PSII_cyt_b559_N"/>
</dbReference>
<dbReference type="NCBIfam" id="TIGR01333">
    <property type="entry name" value="cyt_b559_beta"/>
    <property type="match status" value="1"/>
</dbReference>
<dbReference type="Pfam" id="PF00283">
    <property type="entry name" value="Cytochrom_B559"/>
    <property type="match status" value="1"/>
</dbReference>
<dbReference type="PIRSF" id="PIRSF000037">
    <property type="entry name" value="PsbF"/>
    <property type="match status" value="1"/>
</dbReference>
<dbReference type="SUPFAM" id="SSF161045">
    <property type="entry name" value="Cytochrome b559 subunits"/>
    <property type="match status" value="1"/>
</dbReference>
<dbReference type="PROSITE" id="PS00537">
    <property type="entry name" value="CYTOCHROME_B559"/>
    <property type="match status" value="1"/>
</dbReference>
<name>PSBF_MONCA</name>